<dbReference type="EC" id="6.1.1.19" evidence="1"/>
<dbReference type="EMBL" id="CP001396">
    <property type="protein sequence ID" value="ACR62012.1"/>
    <property type="molecule type" value="Genomic_DNA"/>
</dbReference>
<dbReference type="RefSeq" id="WP_001025322.1">
    <property type="nucleotide sequence ID" value="NC_012759.1"/>
</dbReference>
<dbReference type="SMR" id="C4ZQG0"/>
<dbReference type="GeneID" id="75171948"/>
<dbReference type="KEGG" id="ebw:BWG_1690"/>
<dbReference type="HOGENOM" id="CLU_006406_5_1_6"/>
<dbReference type="GO" id="GO:0005737">
    <property type="term" value="C:cytoplasm"/>
    <property type="evidence" value="ECO:0007669"/>
    <property type="project" value="UniProtKB-SubCell"/>
</dbReference>
<dbReference type="GO" id="GO:0004814">
    <property type="term" value="F:arginine-tRNA ligase activity"/>
    <property type="evidence" value="ECO:0007669"/>
    <property type="project" value="UniProtKB-UniRule"/>
</dbReference>
<dbReference type="GO" id="GO:0005524">
    <property type="term" value="F:ATP binding"/>
    <property type="evidence" value="ECO:0007669"/>
    <property type="project" value="UniProtKB-UniRule"/>
</dbReference>
<dbReference type="GO" id="GO:0006420">
    <property type="term" value="P:arginyl-tRNA aminoacylation"/>
    <property type="evidence" value="ECO:0007669"/>
    <property type="project" value="UniProtKB-UniRule"/>
</dbReference>
<dbReference type="CDD" id="cd07956">
    <property type="entry name" value="Anticodon_Ia_Arg"/>
    <property type="match status" value="1"/>
</dbReference>
<dbReference type="CDD" id="cd00671">
    <property type="entry name" value="ArgRS_core"/>
    <property type="match status" value="1"/>
</dbReference>
<dbReference type="FunFam" id="1.10.730.10:FF:000001">
    <property type="entry name" value="Arginine--tRNA ligase"/>
    <property type="match status" value="1"/>
</dbReference>
<dbReference type="FunFam" id="3.30.1360.70:FF:000001">
    <property type="entry name" value="Arginine--tRNA ligase"/>
    <property type="match status" value="1"/>
</dbReference>
<dbReference type="FunFam" id="3.40.50.620:FF:000030">
    <property type="entry name" value="Arginine--tRNA ligase"/>
    <property type="match status" value="1"/>
</dbReference>
<dbReference type="Gene3D" id="3.30.1360.70">
    <property type="entry name" value="Arginyl tRNA synthetase N-terminal domain"/>
    <property type="match status" value="1"/>
</dbReference>
<dbReference type="Gene3D" id="3.40.50.620">
    <property type="entry name" value="HUPs"/>
    <property type="match status" value="1"/>
</dbReference>
<dbReference type="Gene3D" id="1.10.730.10">
    <property type="entry name" value="Isoleucyl-tRNA Synthetase, Domain 1"/>
    <property type="match status" value="1"/>
</dbReference>
<dbReference type="HAMAP" id="MF_00123">
    <property type="entry name" value="Arg_tRNA_synth"/>
    <property type="match status" value="1"/>
</dbReference>
<dbReference type="InterPro" id="IPR001412">
    <property type="entry name" value="aa-tRNA-synth_I_CS"/>
</dbReference>
<dbReference type="InterPro" id="IPR001278">
    <property type="entry name" value="Arg-tRNA-ligase"/>
</dbReference>
<dbReference type="InterPro" id="IPR005148">
    <property type="entry name" value="Arg-tRNA-synth_N"/>
</dbReference>
<dbReference type="InterPro" id="IPR036695">
    <property type="entry name" value="Arg-tRNA-synth_N_sf"/>
</dbReference>
<dbReference type="InterPro" id="IPR035684">
    <property type="entry name" value="ArgRS_core"/>
</dbReference>
<dbReference type="InterPro" id="IPR008909">
    <property type="entry name" value="DALR_anticod-bd"/>
</dbReference>
<dbReference type="InterPro" id="IPR014729">
    <property type="entry name" value="Rossmann-like_a/b/a_fold"/>
</dbReference>
<dbReference type="InterPro" id="IPR009080">
    <property type="entry name" value="tRNAsynth_Ia_anticodon-bd"/>
</dbReference>
<dbReference type="NCBIfam" id="TIGR00456">
    <property type="entry name" value="argS"/>
    <property type="match status" value="1"/>
</dbReference>
<dbReference type="PANTHER" id="PTHR11956:SF5">
    <property type="entry name" value="ARGININE--TRNA LIGASE, CYTOPLASMIC"/>
    <property type="match status" value="1"/>
</dbReference>
<dbReference type="PANTHER" id="PTHR11956">
    <property type="entry name" value="ARGINYL-TRNA SYNTHETASE"/>
    <property type="match status" value="1"/>
</dbReference>
<dbReference type="Pfam" id="PF03485">
    <property type="entry name" value="Arg_tRNA_synt_N"/>
    <property type="match status" value="1"/>
</dbReference>
<dbReference type="Pfam" id="PF05746">
    <property type="entry name" value="DALR_1"/>
    <property type="match status" value="1"/>
</dbReference>
<dbReference type="Pfam" id="PF00750">
    <property type="entry name" value="tRNA-synt_1d"/>
    <property type="match status" value="1"/>
</dbReference>
<dbReference type="PRINTS" id="PR01038">
    <property type="entry name" value="TRNASYNTHARG"/>
</dbReference>
<dbReference type="SMART" id="SM01016">
    <property type="entry name" value="Arg_tRNA_synt_N"/>
    <property type="match status" value="1"/>
</dbReference>
<dbReference type="SMART" id="SM00836">
    <property type="entry name" value="DALR_1"/>
    <property type="match status" value="1"/>
</dbReference>
<dbReference type="SUPFAM" id="SSF47323">
    <property type="entry name" value="Anticodon-binding domain of a subclass of class I aminoacyl-tRNA synthetases"/>
    <property type="match status" value="1"/>
</dbReference>
<dbReference type="SUPFAM" id="SSF55190">
    <property type="entry name" value="Arginyl-tRNA synthetase (ArgRS), N-terminal 'additional' domain"/>
    <property type="match status" value="1"/>
</dbReference>
<dbReference type="SUPFAM" id="SSF52374">
    <property type="entry name" value="Nucleotidylyl transferase"/>
    <property type="match status" value="1"/>
</dbReference>
<dbReference type="PROSITE" id="PS00178">
    <property type="entry name" value="AA_TRNA_LIGASE_I"/>
    <property type="match status" value="1"/>
</dbReference>
<organism>
    <name type="scientific">Escherichia coli (strain K12 / MC4100 / BW2952)</name>
    <dbReference type="NCBI Taxonomy" id="595496"/>
    <lineage>
        <taxon>Bacteria</taxon>
        <taxon>Pseudomonadati</taxon>
        <taxon>Pseudomonadota</taxon>
        <taxon>Gammaproteobacteria</taxon>
        <taxon>Enterobacterales</taxon>
        <taxon>Enterobacteriaceae</taxon>
        <taxon>Escherichia</taxon>
    </lineage>
</organism>
<name>SYR_ECOBW</name>
<keyword id="KW-0030">Aminoacyl-tRNA synthetase</keyword>
<keyword id="KW-0067">ATP-binding</keyword>
<keyword id="KW-0963">Cytoplasm</keyword>
<keyword id="KW-0436">Ligase</keyword>
<keyword id="KW-0547">Nucleotide-binding</keyword>
<keyword id="KW-0648">Protein biosynthesis</keyword>
<protein>
    <recommendedName>
        <fullName evidence="1">Arginine--tRNA ligase</fullName>
        <ecNumber evidence="1">6.1.1.19</ecNumber>
    </recommendedName>
    <alternativeName>
        <fullName evidence="1">Arginyl-tRNA synthetase</fullName>
        <shortName evidence="1">ArgRS</shortName>
    </alternativeName>
</protein>
<feature type="chain" id="PRO_1000203092" description="Arginine--tRNA ligase">
    <location>
        <begin position="1"/>
        <end position="577"/>
    </location>
</feature>
<feature type="short sequence motif" description="'HIGH' region">
    <location>
        <begin position="122"/>
        <end position="132"/>
    </location>
</feature>
<sequence length="577" mass="64683">MNIQALLSEKVRQAMIAAGAPADCEPQVRQSAKVQFGDYQANGMMAVAKKLGMAPRQLAEQVLTHLDLNGIASKVEIAGPGFINIFLDPAFLAEHVQQALASDRLGVATPEKQTIVVDYSAPNVAKEMHVGHLRSTIIGDAAVRTLEFLGHKVIRANHVGDWGTQFGMLIAWLEKQQQENAGEMELADLEGFYRDAKKHYDEDEEFAERARNYVVKLQSGDEYFREMWRKLVDITMTQNQITYDRLNVTLTRDDVMGESLYNPMLPGIVADLKAKGLAVESEGATVVFLDEFKNKEGEPMGVIIQKKDGGYLYTTTDIACAKYRYETLHADRVLYYIDSRQHQHLMQAWAIVRKAGYVPESVPLEHHMFGMMLGKDGKPFKTRAGGTVKLADLLDEALERARRLVAEKNPDMPADELEKLANAVGIGAVKYADLSKNRTTDYIFDWDNMLAFEGNTAPYMQYAYTRVLSVFRKAEIDEEQLAAAPVIIREDREAQLAARLLQFEETLTVVAREGTPHVMCAYLYDLAGLFSGFYEHCPILSAENEEVRNSRLKLAQLTAKTLKLGLDTLGIETVERM</sequence>
<accession>C4ZQG0</accession>
<evidence type="ECO:0000255" key="1">
    <source>
        <dbReference type="HAMAP-Rule" id="MF_00123"/>
    </source>
</evidence>
<gene>
    <name evidence="1" type="primary">argS</name>
    <name type="ordered locus">BWG_1690</name>
</gene>
<reference key="1">
    <citation type="journal article" date="2009" name="J. Bacteriol.">
        <title>Genomic sequencing reveals regulatory mutations and recombinational events in the widely used MC4100 lineage of Escherichia coli K-12.</title>
        <authorList>
            <person name="Ferenci T."/>
            <person name="Zhou Z."/>
            <person name="Betteridge T."/>
            <person name="Ren Y."/>
            <person name="Liu Y."/>
            <person name="Feng L."/>
            <person name="Reeves P.R."/>
            <person name="Wang L."/>
        </authorList>
    </citation>
    <scope>NUCLEOTIDE SEQUENCE [LARGE SCALE GENOMIC DNA]</scope>
    <source>
        <strain>K12 / MC4100 / BW2952</strain>
    </source>
</reference>
<comment type="catalytic activity">
    <reaction evidence="1">
        <text>tRNA(Arg) + L-arginine + ATP = L-arginyl-tRNA(Arg) + AMP + diphosphate</text>
        <dbReference type="Rhea" id="RHEA:20301"/>
        <dbReference type="Rhea" id="RHEA-COMP:9658"/>
        <dbReference type="Rhea" id="RHEA-COMP:9673"/>
        <dbReference type="ChEBI" id="CHEBI:30616"/>
        <dbReference type="ChEBI" id="CHEBI:32682"/>
        <dbReference type="ChEBI" id="CHEBI:33019"/>
        <dbReference type="ChEBI" id="CHEBI:78442"/>
        <dbReference type="ChEBI" id="CHEBI:78513"/>
        <dbReference type="ChEBI" id="CHEBI:456215"/>
        <dbReference type="EC" id="6.1.1.19"/>
    </reaction>
</comment>
<comment type="subunit">
    <text evidence="1">Monomer.</text>
</comment>
<comment type="subcellular location">
    <subcellularLocation>
        <location evidence="1">Cytoplasm</location>
    </subcellularLocation>
</comment>
<comment type="similarity">
    <text evidence="1">Belongs to the class-I aminoacyl-tRNA synthetase family.</text>
</comment>
<proteinExistence type="inferred from homology"/>